<dbReference type="EC" id="3.1.2.1"/>
<dbReference type="EMBL" id="M31521">
    <property type="protein sequence ID" value="AAA33554.1"/>
    <property type="molecule type" value="Genomic_DNA"/>
</dbReference>
<dbReference type="EMBL" id="CM002237">
    <property type="protein sequence ID" value="EAA29118.1"/>
    <property type="molecule type" value="Genomic_DNA"/>
</dbReference>
<dbReference type="PIR" id="A36316">
    <property type="entry name" value="A36316"/>
</dbReference>
<dbReference type="RefSeq" id="XP_958354.1">
    <property type="nucleotide sequence ID" value="XM_953261.3"/>
</dbReference>
<dbReference type="SMR" id="P15937"/>
<dbReference type="FunCoup" id="P15937">
    <property type="interactions" value="185"/>
</dbReference>
<dbReference type="STRING" id="367110.P15937"/>
<dbReference type="PaxDb" id="5141-EFNCRP00000009588"/>
<dbReference type="EnsemblFungi" id="EAA29118">
    <property type="protein sequence ID" value="EAA29118"/>
    <property type="gene ID" value="NCU09770"/>
</dbReference>
<dbReference type="GeneID" id="3874501"/>
<dbReference type="KEGG" id="ncr:NCU09770"/>
<dbReference type="VEuPathDB" id="FungiDB:NCU09770"/>
<dbReference type="HOGENOM" id="CLU_019748_3_0_1"/>
<dbReference type="InParanoid" id="P15937"/>
<dbReference type="OMA" id="SCIVPMV"/>
<dbReference type="OrthoDB" id="10250396at2759"/>
<dbReference type="Proteomes" id="UP000001805">
    <property type="component" value="Chromosome 6, Linkage Group II"/>
</dbReference>
<dbReference type="GO" id="GO:0005739">
    <property type="term" value="C:mitochondrion"/>
    <property type="evidence" value="ECO:0000318"/>
    <property type="project" value="GO_Central"/>
</dbReference>
<dbReference type="GO" id="GO:0008775">
    <property type="term" value="F:acetate CoA-transferase activity"/>
    <property type="evidence" value="ECO:0000318"/>
    <property type="project" value="GO_Central"/>
</dbReference>
<dbReference type="GO" id="GO:0003986">
    <property type="term" value="F:acetyl-CoA hydrolase activity"/>
    <property type="evidence" value="ECO:0000318"/>
    <property type="project" value="GO_Central"/>
</dbReference>
<dbReference type="GO" id="GO:0006083">
    <property type="term" value="P:acetate metabolic process"/>
    <property type="evidence" value="ECO:0000318"/>
    <property type="project" value="GO_Central"/>
</dbReference>
<dbReference type="FunFam" id="3.30.750.70:FF:000002">
    <property type="entry name" value="Acetyl-CoA hydrolase Ach1"/>
    <property type="match status" value="1"/>
</dbReference>
<dbReference type="FunFam" id="3.40.1080.20:FF:000001">
    <property type="entry name" value="Acetyl-CoA hydrolase Ach1"/>
    <property type="match status" value="1"/>
</dbReference>
<dbReference type="FunFam" id="3.40.1080.10:FF:000003">
    <property type="entry name" value="Acetyl-coA hydrolase Ach1"/>
    <property type="match status" value="1"/>
</dbReference>
<dbReference type="Gene3D" id="3.30.750.70">
    <property type="entry name" value="4-hydroxybutyrate coenzyme like domains"/>
    <property type="match status" value="1"/>
</dbReference>
<dbReference type="Gene3D" id="3.40.1080.20">
    <property type="entry name" value="Acetyl-CoA hydrolase/transferase C-terminal domain"/>
    <property type="match status" value="1"/>
</dbReference>
<dbReference type="Gene3D" id="3.40.1080.10">
    <property type="entry name" value="Glutaconate Coenzyme A-transferase"/>
    <property type="match status" value="1"/>
</dbReference>
<dbReference type="InterPro" id="IPR026888">
    <property type="entry name" value="AcetylCoA_hyd_C"/>
</dbReference>
<dbReference type="InterPro" id="IPR038460">
    <property type="entry name" value="AcetylCoA_hyd_C_sf"/>
</dbReference>
<dbReference type="InterPro" id="IPR046433">
    <property type="entry name" value="ActCoA_hydro"/>
</dbReference>
<dbReference type="InterPro" id="IPR003702">
    <property type="entry name" value="ActCoA_hydro_N"/>
</dbReference>
<dbReference type="InterPro" id="IPR037171">
    <property type="entry name" value="NagB/RpiA_transferase-like"/>
</dbReference>
<dbReference type="PANTHER" id="PTHR43609">
    <property type="entry name" value="ACETYL-COA HYDROLASE"/>
    <property type="match status" value="1"/>
</dbReference>
<dbReference type="PANTHER" id="PTHR43609:SF1">
    <property type="entry name" value="ACETYL-COA HYDROLASE"/>
    <property type="match status" value="1"/>
</dbReference>
<dbReference type="Pfam" id="PF13336">
    <property type="entry name" value="AcetylCoA_hyd_C"/>
    <property type="match status" value="1"/>
</dbReference>
<dbReference type="Pfam" id="PF02550">
    <property type="entry name" value="AcetylCoA_hydro"/>
    <property type="match status" value="1"/>
</dbReference>
<dbReference type="SUPFAM" id="SSF100950">
    <property type="entry name" value="NagB/RpiA/CoA transferase-like"/>
    <property type="match status" value="2"/>
</dbReference>
<proteinExistence type="inferred from homology"/>
<gene>
    <name type="primary">acu-8</name>
    <name type="ORF">NCU09770</name>
</gene>
<accession>P15937</accession>
<accession>Q7RV87</accession>
<reference key="1">
    <citation type="journal article" date="1990" name="Mol. Cell. Biol.">
        <title>Duplication-induced mutation of a new Neurospora gene required for acetate utilization: properties of the mutant and predicted amino acid sequence of the protein product.</title>
        <authorList>
            <person name="Marathe S."/>
            <person name="Connerton I.F."/>
            <person name="Fincham J.R.S."/>
        </authorList>
    </citation>
    <scope>NUCLEOTIDE SEQUENCE [GENOMIC DNA]</scope>
</reference>
<reference key="2">
    <citation type="journal article" date="2003" name="Nature">
        <title>The genome sequence of the filamentous fungus Neurospora crassa.</title>
        <authorList>
            <person name="Galagan J.E."/>
            <person name="Calvo S.E."/>
            <person name="Borkovich K.A."/>
            <person name="Selker E.U."/>
            <person name="Read N.D."/>
            <person name="Jaffe D.B."/>
            <person name="FitzHugh W."/>
            <person name="Ma L.-J."/>
            <person name="Smirnov S."/>
            <person name="Purcell S."/>
            <person name="Rehman B."/>
            <person name="Elkins T."/>
            <person name="Engels R."/>
            <person name="Wang S."/>
            <person name="Nielsen C.B."/>
            <person name="Butler J."/>
            <person name="Endrizzi M."/>
            <person name="Qui D."/>
            <person name="Ianakiev P."/>
            <person name="Bell-Pedersen D."/>
            <person name="Nelson M.A."/>
            <person name="Werner-Washburne M."/>
            <person name="Selitrennikoff C.P."/>
            <person name="Kinsey J.A."/>
            <person name="Braun E.L."/>
            <person name="Zelter A."/>
            <person name="Schulte U."/>
            <person name="Kothe G.O."/>
            <person name="Jedd G."/>
            <person name="Mewes H.-W."/>
            <person name="Staben C."/>
            <person name="Marcotte E."/>
            <person name="Greenberg D."/>
            <person name="Roy A."/>
            <person name="Foley K."/>
            <person name="Naylor J."/>
            <person name="Stange-Thomann N."/>
            <person name="Barrett R."/>
            <person name="Gnerre S."/>
            <person name="Kamal M."/>
            <person name="Kamvysselis M."/>
            <person name="Mauceli E.W."/>
            <person name="Bielke C."/>
            <person name="Rudd S."/>
            <person name="Frishman D."/>
            <person name="Krystofova S."/>
            <person name="Rasmussen C."/>
            <person name="Metzenberg R.L."/>
            <person name="Perkins D.D."/>
            <person name="Kroken S."/>
            <person name="Cogoni C."/>
            <person name="Macino G."/>
            <person name="Catcheside D.E.A."/>
            <person name="Li W."/>
            <person name="Pratt R.J."/>
            <person name="Osmani S.A."/>
            <person name="DeSouza C.P.C."/>
            <person name="Glass N.L."/>
            <person name="Orbach M.J."/>
            <person name="Berglund J.A."/>
            <person name="Voelker R."/>
            <person name="Yarden O."/>
            <person name="Plamann M."/>
            <person name="Seiler S."/>
            <person name="Dunlap J.C."/>
            <person name="Radford A."/>
            <person name="Aramayo R."/>
            <person name="Natvig D.O."/>
            <person name="Alex L.A."/>
            <person name="Mannhaupt G."/>
            <person name="Ebbole D.J."/>
            <person name="Freitag M."/>
            <person name="Paulsen I."/>
            <person name="Sachs M.S."/>
            <person name="Lander E.S."/>
            <person name="Nusbaum C."/>
            <person name="Birren B.W."/>
        </authorList>
    </citation>
    <scope>NUCLEOTIDE SEQUENCE [LARGE SCALE GENOMIC DNA]</scope>
    <source>
        <strain>ATCC 24698 / 74-OR23-1A / CBS 708.71 / DSM 1257 / FGSC 987</strain>
    </source>
</reference>
<reference key="3">
    <citation type="journal article" date="1992" name="J. Gen. Microbiol.">
        <title>An acetate-sensitive mutant of Neurospora crassa deficient in acetyl-CoA hydrolase.</title>
        <authorList>
            <person name="Connerton I.F."/>
            <person name="McCullough W."/>
            <person name="Fincham J.R.S."/>
        </authorList>
    </citation>
    <scope>FUNCTION</scope>
</reference>
<evidence type="ECO:0000250" key="1"/>
<evidence type="ECO:0000250" key="2">
    <source>
        <dbReference type="UniProtKB" id="B3EY95"/>
    </source>
</evidence>
<evidence type="ECO:0000269" key="3">
    <source>
    </source>
</evidence>
<evidence type="ECO:0000305" key="4"/>
<sequence length="525" mass="58006">MASPIASAALRARVKRPSMLKKLCNPEDMLQHFPNGAYIGWSGFTGVGYPKKVPTMLADHVEKNGLQGQLKYSLFVGASAGAETENRWAALDMIARRAPHQVGKNIAKGINEGRINFFDKHLSMFPVDLVYGYYTKDRQNKNLDVVCVEATEIKEDGSIVLGASVGATPELIQMADKVIIEVNTAIPSFDGLHDITFSDLPPNRKPYLIQQCRDRIGTTSVPVDPEKVVGIIECTTPDQTLPNSPADETATAIAGHLIEFFEHEVAHGRLPKNLLPLQSGIGNIANAVIGGLETSNFKNLNVWTEVIQDTFLDLFDSGKLDFATATSIRFSPTGFERFYKNWDNYYDKLLLRSQSVSNAPEIIRRLGVIGMNTPVEVDIYAHANSTNVMGSRMLNGLGGSADFLRNSKYSIMHTPSTRPSKTDAHGVSCIVPMCTHVDQTEHDLDVIVTENGLADVRGLSPRERARVIIDKCAHDVYKPILKAYFEKAEFECLRKGMGHEPHLLFNSFDMHKALVEEGSMAKVKF</sequence>
<name>ACH1_NEUCR</name>
<feature type="chain" id="PRO_0000215521" description="Acetyl-CoA hydrolase">
    <location>
        <begin position="1"/>
        <end position="525"/>
    </location>
</feature>
<feature type="active site" description="5-glutamyl coenzyme A thioester intermediate" evidence="2">
    <location>
        <position position="305"/>
    </location>
</feature>
<feature type="binding site" evidence="2">
    <location>
        <begin position="280"/>
        <end position="284"/>
    </location>
    <ligand>
        <name>CoA</name>
        <dbReference type="ChEBI" id="CHEBI:57287"/>
    </ligand>
</feature>
<feature type="binding site" evidence="2">
    <location>
        <position position="395"/>
    </location>
    <ligand>
        <name>CoA</name>
        <dbReference type="ChEBI" id="CHEBI:57287"/>
    </ligand>
</feature>
<feature type="binding site" evidence="2">
    <location>
        <position position="399"/>
    </location>
    <ligand>
        <name>CoA</name>
        <dbReference type="ChEBI" id="CHEBI:57287"/>
    </ligand>
</feature>
<feature type="sequence conflict" description="In Ref. 1; AAA33554." evidence="4" ref="1">
    <original>VKR</original>
    <variation>QG</variation>
    <location>
        <begin position="14"/>
        <end position="16"/>
    </location>
</feature>
<feature type="sequence conflict" description="In Ref. 1; AAA33554." evidence="4" ref="1">
    <original>GVGYPKKVPTM</original>
    <variation>ASATPRRSYY</variation>
    <location>
        <begin position="46"/>
        <end position="56"/>
    </location>
</feature>
<feature type="sequence conflict" description="In Ref. 1; AAA33554." evidence="4" ref="1">
    <original>GLQGQLKYSLFVGASAGAETEN</original>
    <variation>ASRPAQVQPLRRCLRRRRDRE</variation>
    <location>
        <begin position="65"/>
        <end position="86"/>
    </location>
</feature>
<feature type="sequence conflict" description="In Ref. 1; AAA33554." evidence="4" ref="1">
    <original>A</original>
    <variation>AHDR</variation>
    <location>
        <position position="95"/>
    </location>
</feature>
<protein>
    <recommendedName>
        <fullName>Acetyl-CoA hydrolase</fullName>
        <ecNumber>3.1.2.1</ecNumber>
    </recommendedName>
    <alternativeName>
        <fullName>Acetate utilization protein</fullName>
    </alternativeName>
    <alternativeName>
        <fullName>Acetyl-CoA deacylase</fullName>
        <shortName>Acetyl-CoA acylase</shortName>
    </alternativeName>
</protein>
<comment type="function">
    <text evidence="3">Required for utilization of acetate.</text>
</comment>
<comment type="catalytic activity">
    <reaction>
        <text>acetyl-CoA + H2O = acetate + CoA + H(+)</text>
        <dbReference type="Rhea" id="RHEA:20289"/>
        <dbReference type="ChEBI" id="CHEBI:15377"/>
        <dbReference type="ChEBI" id="CHEBI:15378"/>
        <dbReference type="ChEBI" id="CHEBI:30089"/>
        <dbReference type="ChEBI" id="CHEBI:57287"/>
        <dbReference type="ChEBI" id="CHEBI:57288"/>
        <dbReference type="EC" id="3.1.2.1"/>
    </reaction>
</comment>
<comment type="subcellular location">
    <subcellularLocation>
        <location evidence="1">Cytoplasm</location>
    </subcellularLocation>
</comment>
<comment type="similarity">
    <text evidence="4">Belongs to the acetyl-CoA hydrolase/transferase family.</text>
</comment>
<organism>
    <name type="scientific">Neurospora crassa (strain ATCC 24698 / 74-OR23-1A / CBS 708.71 / DSM 1257 / FGSC 987)</name>
    <dbReference type="NCBI Taxonomy" id="367110"/>
    <lineage>
        <taxon>Eukaryota</taxon>
        <taxon>Fungi</taxon>
        <taxon>Dikarya</taxon>
        <taxon>Ascomycota</taxon>
        <taxon>Pezizomycotina</taxon>
        <taxon>Sordariomycetes</taxon>
        <taxon>Sordariomycetidae</taxon>
        <taxon>Sordariales</taxon>
        <taxon>Sordariaceae</taxon>
        <taxon>Neurospora</taxon>
    </lineage>
</organism>
<keyword id="KW-0963">Cytoplasm</keyword>
<keyword id="KW-0378">Hydrolase</keyword>
<keyword id="KW-1185">Reference proteome</keyword>